<evidence type="ECO:0000256" key="1">
    <source>
        <dbReference type="SAM" id="MobiDB-lite"/>
    </source>
</evidence>
<keyword id="KW-1185">Reference proteome</keyword>
<gene>
    <name type="primary">ypzI</name>
    <name type="ordered locus">BSU22869</name>
</gene>
<accession>C0H446</accession>
<protein>
    <recommendedName>
        <fullName>Uncharacterized protein YpzI</fullName>
    </recommendedName>
</protein>
<sequence length="45" mass="5211">MIMGKDRQEKKLKASGRVESDRDQSIHYDGATSLEQNGRFKKRKS</sequence>
<organism>
    <name type="scientific">Bacillus subtilis (strain 168)</name>
    <dbReference type="NCBI Taxonomy" id="224308"/>
    <lineage>
        <taxon>Bacteria</taxon>
        <taxon>Bacillati</taxon>
        <taxon>Bacillota</taxon>
        <taxon>Bacilli</taxon>
        <taxon>Bacillales</taxon>
        <taxon>Bacillaceae</taxon>
        <taxon>Bacillus</taxon>
    </lineage>
</organism>
<name>YPZI_BACSU</name>
<dbReference type="EMBL" id="AL009126">
    <property type="protein sequence ID" value="CAX52655.1"/>
    <property type="molecule type" value="Genomic_DNA"/>
</dbReference>
<dbReference type="RefSeq" id="YP_003097756.1">
    <property type="nucleotide sequence ID" value="NC_000964.3"/>
</dbReference>
<dbReference type="STRING" id="224308.BSU22869"/>
<dbReference type="PaxDb" id="224308-BSU22869"/>
<dbReference type="EnsemblBacteria" id="CAX52655">
    <property type="protein sequence ID" value="CAX52655"/>
    <property type="gene ID" value="BSU_22869"/>
</dbReference>
<dbReference type="GeneID" id="8303059"/>
<dbReference type="KEGG" id="bsu:BSU22869"/>
<dbReference type="PATRIC" id="fig|224308.43.peg.2384"/>
<dbReference type="InParanoid" id="C0H446"/>
<dbReference type="OrthoDB" id="2692085at2"/>
<dbReference type="BioCyc" id="BSUB:BSU22869-MONOMER"/>
<dbReference type="Proteomes" id="UP000001570">
    <property type="component" value="Chromosome"/>
</dbReference>
<dbReference type="InterPro" id="IPR025414">
    <property type="entry name" value="YpzI-like"/>
</dbReference>
<dbReference type="Pfam" id="PF14140">
    <property type="entry name" value="YpzI"/>
    <property type="match status" value="1"/>
</dbReference>
<proteinExistence type="predicted"/>
<reference key="1">
    <citation type="journal article" date="1997" name="Nature">
        <title>The complete genome sequence of the Gram-positive bacterium Bacillus subtilis.</title>
        <authorList>
            <person name="Kunst F."/>
            <person name="Ogasawara N."/>
            <person name="Moszer I."/>
            <person name="Albertini A.M."/>
            <person name="Alloni G."/>
            <person name="Azevedo V."/>
            <person name="Bertero M.G."/>
            <person name="Bessieres P."/>
            <person name="Bolotin A."/>
            <person name="Borchert S."/>
            <person name="Borriss R."/>
            <person name="Boursier L."/>
            <person name="Brans A."/>
            <person name="Braun M."/>
            <person name="Brignell S.C."/>
            <person name="Bron S."/>
            <person name="Brouillet S."/>
            <person name="Bruschi C.V."/>
            <person name="Caldwell B."/>
            <person name="Capuano V."/>
            <person name="Carter N.M."/>
            <person name="Choi S.-K."/>
            <person name="Codani J.-J."/>
            <person name="Connerton I.F."/>
            <person name="Cummings N.J."/>
            <person name="Daniel R.A."/>
            <person name="Denizot F."/>
            <person name="Devine K.M."/>
            <person name="Duesterhoeft A."/>
            <person name="Ehrlich S.D."/>
            <person name="Emmerson P.T."/>
            <person name="Entian K.-D."/>
            <person name="Errington J."/>
            <person name="Fabret C."/>
            <person name="Ferrari E."/>
            <person name="Foulger D."/>
            <person name="Fritz C."/>
            <person name="Fujita M."/>
            <person name="Fujita Y."/>
            <person name="Fuma S."/>
            <person name="Galizzi A."/>
            <person name="Galleron N."/>
            <person name="Ghim S.-Y."/>
            <person name="Glaser P."/>
            <person name="Goffeau A."/>
            <person name="Golightly E.J."/>
            <person name="Grandi G."/>
            <person name="Guiseppi G."/>
            <person name="Guy B.J."/>
            <person name="Haga K."/>
            <person name="Haiech J."/>
            <person name="Harwood C.R."/>
            <person name="Henaut A."/>
            <person name="Hilbert H."/>
            <person name="Holsappel S."/>
            <person name="Hosono S."/>
            <person name="Hullo M.-F."/>
            <person name="Itaya M."/>
            <person name="Jones L.-M."/>
            <person name="Joris B."/>
            <person name="Karamata D."/>
            <person name="Kasahara Y."/>
            <person name="Klaerr-Blanchard M."/>
            <person name="Klein C."/>
            <person name="Kobayashi Y."/>
            <person name="Koetter P."/>
            <person name="Koningstein G."/>
            <person name="Krogh S."/>
            <person name="Kumano M."/>
            <person name="Kurita K."/>
            <person name="Lapidus A."/>
            <person name="Lardinois S."/>
            <person name="Lauber J."/>
            <person name="Lazarevic V."/>
            <person name="Lee S.-M."/>
            <person name="Levine A."/>
            <person name="Liu H."/>
            <person name="Masuda S."/>
            <person name="Mauel C."/>
            <person name="Medigue C."/>
            <person name="Medina N."/>
            <person name="Mellado R.P."/>
            <person name="Mizuno M."/>
            <person name="Moestl D."/>
            <person name="Nakai S."/>
            <person name="Noback M."/>
            <person name="Noone D."/>
            <person name="O'Reilly M."/>
            <person name="Ogawa K."/>
            <person name="Ogiwara A."/>
            <person name="Oudega B."/>
            <person name="Park S.-H."/>
            <person name="Parro V."/>
            <person name="Pohl T.M."/>
            <person name="Portetelle D."/>
            <person name="Porwollik S."/>
            <person name="Prescott A.M."/>
            <person name="Presecan E."/>
            <person name="Pujic P."/>
            <person name="Purnelle B."/>
            <person name="Rapoport G."/>
            <person name="Rey M."/>
            <person name="Reynolds S."/>
            <person name="Rieger M."/>
            <person name="Rivolta C."/>
            <person name="Rocha E."/>
            <person name="Roche B."/>
            <person name="Rose M."/>
            <person name="Sadaie Y."/>
            <person name="Sato T."/>
            <person name="Scanlan E."/>
            <person name="Schleich S."/>
            <person name="Schroeter R."/>
            <person name="Scoffone F."/>
            <person name="Sekiguchi J."/>
            <person name="Sekowska A."/>
            <person name="Seror S.J."/>
            <person name="Serror P."/>
            <person name="Shin B.-S."/>
            <person name="Soldo B."/>
            <person name="Sorokin A."/>
            <person name="Tacconi E."/>
            <person name="Takagi T."/>
            <person name="Takahashi H."/>
            <person name="Takemaru K."/>
            <person name="Takeuchi M."/>
            <person name="Tamakoshi A."/>
            <person name="Tanaka T."/>
            <person name="Terpstra P."/>
            <person name="Tognoni A."/>
            <person name="Tosato V."/>
            <person name="Uchiyama S."/>
            <person name="Vandenbol M."/>
            <person name="Vannier F."/>
            <person name="Vassarotti A."/>
            <person name="Viari A."/>
            <person name="Wambutt R."/>
            <person name="Wedler E."/>
            <person name="Wedler H."/>
            <person name="Weitzenegger T."/>
            <person name="Winters P."/>
            <person name="Wipat A."/>
            <person name="Yamamoto H."/>
            <person name="Yamane K."/>
            <person name="Yasumoto K."/>
            <person name="Yata K."/>
            <person name="Yoshida K."/>
            <person name="Yoshikawa H.-F."/>
            <person name="Zumstein E."/>
            <person name="Yoshikawa H."/>
            <person name="Danchin A."/>
        </authorList>
    </citation>
    <scope>NUCLEOTIDE SEQUENCE [LARGE SCALE GENOMIC DNA]</scope>
    <source>
        <strain>168</strain>
    </source>
</reference>
<feature type="chain" id="PRO_0000386670" description="Uncharacterized protein YpzI">
    <location>
        <begin position="1"/>
        <end position="45"/>
    </location>
</feature>
<feature type="region of interest" description="Disordered" evidence="1">
    <location>
        <begin position="1"/>
        <end position="45"/>
    </location>
</feature>
<feature type="compositionally biased region" description="Basic and acidic residues" evidence="1">
    <location>
        <begin position="1"/>
        <end position="26"/>
    </location>
</feature>